<organism>
    <name type="scientific">Colletotrichum gloeosporioides</name>
    <name type="common">Anthracnose fungus</name>
    <name type="synonym">Glomerella cingulata</name>
    <dbReference type="NCBI Taxonomy" id="474922"/>
    <lineage>
        <taxon>Eukaryota</taxon>
        <taxon>Fungi</taxon>
        <taxon>Dikarya</taxon>
        <taxon>Ascomycota</taxon>
        <taxon>Pezizomycotina</taxon>
        <taxon>Sordariomycetes</taxon>
        <taxon>Hypocreomycetidae</taxon>
        <taxon>Glomerellales</taxon>
        <taxon>Glomerellaceae</taxon>
        <taxon>Colletotrichum</taxon>
        <taxon>Colletotrichum gloeosporioides species complex</taxon>
    </lineage>
</organism>
<dbReference type="EC" id="4.2.3.214" evidence="5"/>
<dbReference type="EC" id="4.2.3.215" evidence="5"/>
<dbReference type="EC" id="2.5.1.29" evidence="5"/>
<dbReference type="SMR" id="P9WEV7"/>
<dbReference type="GO" id="GO:0004311">
    <property type="term" value="F:geranylgeranyl diphosphate synthase activity"/>
    <property type="evidence" value="ECO:0007669"/>
    <property type="project" value="UniProtKB-EC"/>
</dbReference>
<dbReference type="GO" id="GO:0016829">
    <property type="term" value="F:lyase activity"/>
    <property type="evidence" value="ECO:0007669"/>
    <property type="project" value="UniProtKB-KW"/>
</dbReference>
<dbReference type="GO" id="GO:0046872">
    <property type="term" value="F:metal ion binding"/>
    <property type="evidence" value="ECO:0007669"/>
    <property type="project" value="UniProtKB-KW"/>
</dbReference>
<dbReference type="GO" id="GO:0046165">
    <property type="term" value="P:alcohol biosynthetic process"/>
    <property type="evidence" value="ECO:0007669"/>
    <property type="project" value="UniProtKB-ARBA"/>
</dbReference>
<dbReference type="GO" id="GO:0008299">
    <property type="term" value="P:isoprenoid biosynthetic process"/>
    <property type="evidence" value="ECO:0007669"/>
    <property type="project" value="UniProtKB-KW"/>
</dbReference>
<dbReference type="GO" id="GO:0043386">
    <property type="term" value="P:mycotoxin biosynthetic process"/>
    <property type="evidence" value="ECO:0007669"/>
    <property type="project" value="UniProtKB-ARBA"/>
</dbReference>
<dbReference type="Gene3D" id="1.10.600.10">
    <property type="entry name" value="Farnesyl Diphosphate Synthase"/>
    <property type="match status" value="2"/>
</dbReference>
<dbReference type="InterPro" id="IPR008949">
    <property type="entry name" value="Isoprenoid_synthase_dom_sf"/>
</dbReference>
<dbReference type="InterPro" id="IPR000092">
    <property type="entry name" value="Polyprenyl_synt"/>
</dbReference>
<dbReference type="InterPro" id="IPR033749">
    <property type="entry name" value="Polyprenyl_synt_CS"/>
</dbReference>
<dbReference type="PANTHER" id="PTHR12001">
    <property type="entry name" value="GERANYLGERANYL PYROPHOSPHATE SYNTHASE"/>
    <property type="match status" value="1"/>
</dbReference>
<dbReference type="PANTHER" id="PTHR12001:SF44">
    <property type="entry name" value="GERANYLGERANYL PYROPHOSPHATE SYNTHASE"/>
    <property type="match status" value="1"/>
</dbReference>
<dbReference type="Pfam" id="PF00348">
    <property type="entry name" value="polyprenyl_synt"/>
    <property type="match status" value="1"/>
</dbReference>
<dbReference type="Pfam" id="PF19086">
    <property type="entry name" value="Terpene_syn_C_2"/>
    <property type="match status" value="1"/>
</dbReference>
<dbReference type="SUPFAM" id="SSF48576">
    <property type="entry name" value="Terpenoid synthases"/>
    <property type="match status" value="2"/>
</dbReference>
<dbReference type="PROSITE" id="PS00723">
    <property type="entry name" value="POLYPRENYL_SYNTHASE_1"/>
    <property type="match status" value="1"/>
</dbReference>
<dbReference type="PROSITE" id="PS00444">
    <property type="entry name" value="POLYPRENYL_SYNTHASE_2"/>
    <property type="match status" value="1"/>
</dbReference>
<comment type="function">
    <text evidence="5">Bifunctional terpene synthase involved in the biosynthesis of the diterpenes delta-araneosene and dolasta-1(15),8-diene (PubMed:30277637). The C-terminal prenyltransferase domain of CgDS catalyzes formation of the universal precursor of diterpene, geranylgeranyl diphosphate (GGPP), whereas the N-terminal terpene cyclase domain catalyzes the cyclization of GGPP to the intermediate delta-araneosene that is further converted to dolasta-1(15),8-diene in a second cyclization event (PubMed:30277637). In some cases the cyclization stops at the delta-araneosene stage (PubMed:30277637).</text>
</comment>
<comment type="catalytic activity">
    <reaction evidence="5">
        <text>isopentenyl diphosphate + (2E,6E)-farnesyl diphosphate = (2E,6E,10E)-geranylgeranyl diphosphate + diphosphate</text>
        <dbReference type="Rhea" id="RHEA:17653"/>
        <dbReference type="ChEBI" id="CHEBI:33019"/>
        <dbReference type="ChEBI" id="CHEBI:58756"/>
        <dbReference type="ChEBI" id="CHEBI:128769"/>
        <dbReference type="ChEBI" id="CHEBI:175763"/>
        <dbReference type="EC" id="2.5.1.29"/>
    </reaction>
    <physiologicalReaction direction="left-to-right" evidence="5">
        <dbReference type="Rhea" id="RHEA:17654"/>
    </physiologicalReaction>
</comment>
<comment type="catalytic activity">
    <reaction evidence="5">
        <text>(2E,6E,10E)-geranylgeranyl diphosphate = (5R,12R,14S)-dolasta-1(15),8-diene + diphosphate</text>
        <dbReference type="Rhea" id="RHEA:77963"/>
        <dbReference type="ChEBI" id="CHEBI:33019"/>
        <dbReference type="ChEBI" id="CHEBI:58756"/>
        <dbReference type="ChEBI" id="CHEBI:192990"/>
        <dbReference type="EC" id="4.2.3.214"/>
    </reaction>
    <physiologicalReaction direction="left-to-right" evidence="5">
        <dbReference type="Rhea" id="RHEA:77964"/>
    </physiologicalReaction>
</comment>
<comment type="catalytic activity">
    <reaction evidence="5">
        <text>(2E,6E,10E)-geranylgeranyl diphosphate = delta-araneosene + diphosphate</text>
        <dbReference type="Rhea" id="RHEA:78275"/>
        <dbReference type="ChEBI" id="CHEBI:33019"/>
        <dbReference type="ChEBI" id="CHEBI:58756"/>
        <dbReference type="ChEBI" id="CHEBI:192991"/>
        <dbReference type="EC" id="4.2.3.215"/>
    </reaction>
    <physiologicalReaction direction="left-to-right" evidence="5">
        <dbReference type="Rhea" id="RHEA:78276"/>
    </physiologicalReaction>
</comment>
<comment type="cofactor">
    <cofactor evidence="5">
        <name>Mg(2+)</name>
        <dbReference type="ChEBI" id="CHEBI:18420"/>
    </cofactor>
</comment>
<comment type="subunit">
    <text evidence="1">Hexamer.</text>
</comment>
<comment type="domain">
    <text evidence="8">The DDXXD motifs are important for the catalytic activity, presumably through binding to Mg(2+).</text>
</comment>
<comment type="similarity">
    <text evidence="7">In the N-terminal section; belongs to the terpene synthase family.</text>
</comment>
<comment type="similarity">
    <text evidence="7">In the C-terminal section; belongs to the FPP/GGPP synthase family.</text>
</comment>
<gene>
    <name evidence="6" type="primary">CgDS</name>
</gene>
<proteinExistence type="evidence at protein level"/>
<protein>
    <recommendedName>
        <fullName evidence="6">Dolasta-1(15),8-diene synthase</fullName>
        <shortName evidence="6">DS</shortName>
    </recommendedName>
    <domain>
        <recommendedName>
            <fullName evidence="6">Terpene cyclase</fullName>
            <ecNumber evidence="5">4.2.3.214</ecNumber>
            <ecNumber evidence="5">4.2.3.215</ecNumber>
        </recommendedName>
    </domain>
    <domain>
        <recommendedName>
            <fullName evidence="6">Geranylgeranyl diphosphate synthase</fullName>
            <shortName evidence="6">GGDP synthase</shortName>
            <shortName evidence="6">GGS</shortName>
            <ecNumber evidence="5">2.5.1.29</ecNumber>
        </recommendedName>
    </domain>
</protein>
<feature type="chain" id="PRO_0000450828" description="Dolasta-1(15),8-diene synthase">
    <location>
        <begin position="1"/>
        <end position="744"/>
    </location>
</feature>
<feature type="region of interest" description="Terpene cyclase" evidence="8">
    <location>
        <begin position="1"/>
        <end position="344"/>
    </location>
</feature>
<feature type="region of interest" description="Prenyltransferase" evidence="8">
    <location>
        <begin position="345"/>
        <end position="744"/>
    </location>
</feature>
<feature type="region of interest" description="Disordered" evidence="4">
    <location>
        <begin position="399"/>
        <end position="422"/>
    </location>
</feature>
<feature type="short sequence motif" description="DDXXD" evidence="8">
    <location>
        <begin position="108"/>
        <end position="112"/>
    </location>
</feature>
<feature type="short sequence motif" description="DDXXD" evidence="8">
    <location>
        <begin position="495"/>
        <end position="499"/>
    </location>
</feature>
<feature type="compositionally biased region" description="Basic and acidic residues" evidence="4">
    <location>
        <begin position="409"/>
        <end position="422"/>
    </location>
</feature>
<feature type="binding site" evidence="3">
    <location>
        <position position="108"/>
    </location>
    <ligand>
        <name>Mg(2+)</name>
        <dbReference type="ChEBI" id="CHEBI:18420"/>
        <label>1</label>
    </ligand>
</feature>
<feature type="binding site" evidence="3">
    <location>
        <position position="108"/>
    </location>
    <ligand>
        <name>Mg(2+)</name>
        <dbReference type="ChEBI" id="CHEBI:18420"/>
        <label>2</label>
    </ligand>
</feature>
<feature type="binding site" evidence="1">
    <location>
        <position position="108"/>
    </location>
    <ligand>
        <name>substrate</name>
    </ligand>
</feature>
<feature type="binding site" evidence="3">
    <location>
        <position position="112"/>
    </location>
    <ligand>
        <name>Mg(2+)</name>
        <dbReference type="ChEBI" id="CHEBI:18420"/>
        <label>1</label>
    </ligand>
</feature>
<feature type="binding site" evidence="3">
    <location>
        <position position="112"/>
    </location>
    <ligand>
        <name>Mg(2+)</name>
        <dbReference type="ChEBI" id="CHEBI:18420"/>
        <label>2</label>
    </ligand>
</feature>
<feature type="binding site" evidence="1">
    <location>
        <position position="112"/>
    </location>
    <ligand>
        <name>substrate</name>
    </ligand>
</feature>
<feature type="binding site" evidence="1">
    <location>
        <begin position="198"/>
        <end position="201"/>
    </location>
    <ligand>
        <name>substrate</name>
    </ligand>
</feature>
<feature type="binding site" evidence="1">
    <location>
        <begin position="246"/>
        <end position="250"/>
    </location>
    <ligand>
        <name>substrate</name>
    </ligand>
</feature>
<feature type="binding site" evidence="1">
    <location>
        <begin position="336"/>
        <end position="337"/>
    </location>
    <ligand>
        <name>substrate</name>
    </ligand>
</feature>
<feature type="binding site" evidence="2">
    <location>
        <position position="459"/>
    </location>
    <ligand>
        <name>isopentenyl diphosphate</name>
        <dbReference type="ChEBI" id="CHEBI:128769"/>
    </ligand>
</feature>
<feature type="binding site" evidence="2">
    <location>
        <position position="488"/>
    </location>
    <ligand>
        <name>isopentenyl diphosphate</name>
        <dbReference type="ChEBI" id="CHEBI:128769"/>
    </ligand>
</feature>
<feature type="binding site" evidence="2">
    <location>
        <position position="495"/>
    </location>
    <ligand>
        <name>Mg(2+)</name>
        <dbReference type="ChEBI" id="CHEBI:18420"/>
        <label>3</label>
    </ligand>
</feature>
<feature type="binding site" evidence="2">
    <location>
        <position position="495"/>
    </location>
    <ligand>
        <name>Mg(2+)</name>
        <dbReference type="ChEBI" id="CHEBI:18420"/>
        <label>4</label>
    </ligand>
</feature>
<feature type="binding site" evidence="2">
    <location>
        <position position="499"/>
    </location>
    <ligand>
        <name>Mg(2+)</name>
        <dbReference type="ChEBI" id="CHEBI:18420"/>
        <label>3</label>
    </ligand>
</feature>
<feature type="binding site" evidence="2">
    <location>
        <position position="499"/>
    </location>
    <ligand>
        <name>Mg(2+)</name>
        <dbReference type="ChEBI" id="CHEBI:18420"/>
        <label>4</label>
    </ligand>
</feature>
<feature type="binding site" evidence="2">
    <location>
        <position position="504"/>
    </location>
    <ligand>
        <name>dimethylallyl diphosphate</name>
        <dbReference type="ChEBI" id="CHEBI:57623"/>
    </ligand>
</feature>
<feature type="binding site" evidence="2">
    <location>
        <position position="505"/>
    </location>
    <ligand>
        <name>isopentenyl diphosphate</name>
        <dbReference type="ChEBI" id="CHEBI:128769"/>
    </ligand>
</feature>
<feature type="binding site" evidence="2">
    <location>
        <position position="581"/>
    </location>
    <ligand>
        <name>dimethylallyl diphosphate</name>
        <dbReference type="ChEBI" id="CHEBI:57623"/>
    </ligand>
</feature>
<feature type="binding site" evidence="2">
    <location>
        <position position="582"/>
    </location>
    <ligand>
        <name>dimethylallyl diphosphate</name>
        <dbReference type="ChEBI" id="CHEBI:57623"/>
    </ligand>
</feature>
<feature type="binding site" evidence="2">
    <location>
        <position position="617"/>
    </location>
    <ligand>
        <name>dimethylallyl diphosphate</name>
        <dbReference type="ChEBI" id="CHEBI:57623"/>
    </ligand>
</feature>
<reference key="1">
    <citation type="journal article" date="2018" name="Angew. Chem. Int. Ed.">
        <title>A clade II-D fungal chimeric diterpene synthase from Colletotrichum gloeosporioides produces dolasta-1(15),8-diene.</title>
        <authorList>
            <person name="Bian G."/>
            <person name="Rinkel J."/>
            <person name="Wang Z."/>
            <person name="Lauterbach L."/>
            <person name="Hou A."/>
            <person name="Yuan Y."/>
            <person name="Deng Z."/>
            <person name="Liu T."/>
            <person name="Dickschat J.S."/>
        </authorList>
    </citation>
    <scope>NUCLEOTIDE SEQUENCE [MRNA]</scope>
    <scope>FUNCTION</scope>
    <scope>CATALYTIC ACTIVITY</scope>
    <scope>COFACTOR</scope>
    <scope>DOMAIN</scope>
</reference>
<keyword id="KW-0414">Isoprene biosynthesis</keyword>
<keyword id="KW-0456">Lyase</keyword>
<keyword id="KW-0460">Magnesium</keyword>
<keyword id="KW-0479">Metal-binding</keyword>
<keyword id="KW-0511">Multifunctional enzyme</keyword>
<keyword id="KW-0677">Repeat</keyword>
<keyword id="KW-0808">Transferase</keyword>
<sequence length="744" mass="83696">MASTMMNYQDCGPMRYKSSVPVPASLYENTAYPSKFRPRISKHVDVADKACWEACDDFENATGLKLKADSVGCINPIGGNVNALWFPEAIPERLHIISYLSELLFRHDDLTDDAVTPEQFDEVHGPLARFLGSESKQSDHTTKHNAMNTMQARVAIEALEQNEQLGKLVIEKWKGIVSVRGQDAFMEHKTLDSYMHVRHYDAGAYSVWSQILFCCDISLTDEELTGLEPLTWLAFTQMILWHDYCSWDKEAATYLEREEGGSNMSAVQVYMAMYGLDQYAAKEFLLSEITRIEDEYCERKASYMIEFPPAPHITHYIGLIEMCMAGNTLWHLSSRRYNPAAPLPRREDIGKVNGGPLDASEVSKPVECSESDLGILTPVSSRLSTKRLRPFWNNQRTEYTTMTPAETSSDDKKKKAKASHETREDLLTVSPCAWPAEPDEKDILAAYLYTAARPASGARDKLMDALDKWYRVPPDALATIRTIIRIMHNASLMLDDVQDNSPVRRGSPSAHVIFGTAQTTNSASYLMIKCVDLARRLGDDSLSCLLSELSQLHLGQSHDLAWTFHCKAPSIPEYYSHLEQKTGGLFRMASRMMRASATQNKHLDACKLMSLLGRLYQLRDDYQDITSESLSTYDDLDEGSFTLPLIHALHREEEQGEVQLHSILQSARAARSASASSNNDGKLSVETKLLIREMLEEAGSLEHTRVVIRGLYDETRAVLTAMENEAGSGGKNWMLHLITFQLKV</sequence>
<name>CGDS_COLGL</name>
<evidence type="ECO:0000250" key="1">
    <source>
        <dbReference type="UniProtKB" id="A2PZA5"/>
    </source>
</evidence>
<evidence type="ECO:0000250" key="2">
    <source>
        <dbReference type="UniProtKB" id="Q12051"/>
    </source>
</evidence>
<evidence type="ECO:0000250" key="3">
    <source>
        <dbReference type="UniProtKB" id="Q40577"/>
    </source>
</evidence>
<evidence type="ECO:0000256" key="4">
    <source>
        <dbReference type="SAM" id="MobiDB-lite"/>
    </source>
</evidence>
<evidence type="ECO:0000269" key="5">
    <source>
    </source>
</evidence>
<evidence type="ECO:0000303" key="6">
    <source>
    </source>
</evidence>
<evidence type="ECO:0000305" key="7"/>
<evidence type="ECO:0000305" key="8">
    <source>
    </source>
</evidence>
<accession>P9WEV7</accession>